<sequence length="610" mass="68588">MKWVVSFFLLFLLNFSDSRTMHKNAYGIDSILDSSPCSSGTNLVGLATIFFAQSVQGATYEEVSQMVKDVLTIIEKPTGSKQPAGCLENQVSAFLEEICREKEIPEKYGLSDCCSRTGEERHDCFLAHKKAAPASIPPFPVLEPVTSCKSYKENRELFINRYIYEIARRHPVLYAPTILSVANQYNKIIPHCCKAENATECFETKVTSITKELRESSLLNQHICAVMGKFGPRTFRAITVTKVSQKFPKANFTEIQKLVMDVAHIHEECCKGNVLECLQDGERVMSYICSQQDILSRQIAECCKLPTTLELGHCIIHAENDDKPEGLSPNVNRFLGDRDFNQLSSRDKDLSMARFTYEYSRRHTKLAVPIILRVAKGYQELLEKCSQSENPSECQDKGEEELEKYIQESQALAKRSCGLFQKLGEYYLQNAFLVAYTKKAPQLTSPELMALTRKMANAGAICCHLSEDKQLACGEGVADLIIGHLCIRHEENPINPGVDQCCTSSYSNRRPCFSSLVVDETYVPPPFSDDKFIFHKDLCQVQGVPLQTMKQQFLINLVKQKPQITEEQLETVVADFSGLLEKCCQSQEQEVCFTEEGPALISKTRAALGV</sequence>
<comment type="function">
    <text evidence="1">Binds copper, nickel, and fatty acids as well as, and bilirubin less well than, serum albumin.</text>
</comment>
<comment type="subunit">
    <text evidence="1">Dimeric and trimeric forms have been found in addition to the monomeric form.</text>
</comment>
<comment type="subcellular location">
    <subcellularLocation>
        <location evidence="4">Secreted</location>
    </subcellularLocation>
</comment>
<comment type="tissue specificity">
    <text>Plasma.</text>
</comment>
<comment type="PTM">
    <text evidence="1">Sulfated.</text>
</comment>
<comment type="similarity">
    <text evidence="4">Belongs to the ALB/AFP/VDB family.</text>
</comment>
<proteinExistence type="evidence at transcript level"/>
<organism>
    <name type="scientific">Bos taurus</name>
    <name type="common">Bovine</name>
    <dbReference type="NCBI Taxonomy" id="9913"/>
    <lineage>
        <taxon>Eukaryota</taxon>
        <taxon>Metazoa</taxon>
        <taxon>Chordata</taxon>
        <taxon>Craniata</taxon>
        <taxon>Vertebrata</taxon>
        <taxon>Euteleostomi</taxon>
        <taxon>Mammalia</taxon>
        <taxon>Eutheria</taxon>
        <taxon>Laurasiatheria</taxon>
        <taxon>Artiodactyla</taxon>
        <taxon>Ruminantia</taxon>
        <taxon>Pecora</taxon>
        <taxon>Bovidae</taxon>
        <taxon>Bovinae</taxon>
        <taxon>Bos</taxon>
    </lineage>
</organism>
<keyword id="KW-0186">Copper</keyword>
<keyword id="KW-1015">Disulfide bond</keyword>
<keyword id="KW-0325">Glycoprotein</keyword>
<keyword id="KW-0479">Metal-binding</keyword>
<keyword id="KW-0533">Nickel</keyword>
<keyword id="KW-0597">Phosphoprotein</keyword>
<keyword id="KW-1185">Reference proteome</keyword>
<keyword id="KW-0677">Repeat</keyword>
<keyword id="KW-0964">Secreted</keyword>
<keyword id="KW-0732">Signal</keyword>
<keyword id="KW-0765">Sulfation</keyword>
<evidence type="ECO:0000250" key="1"/>
<evidence type="ECO:0000250" key="2">
    <source>
        <dbReference type="UniProtKB" id="P02771"/>
    </source>
</evidence>
<evidence type="ECO:0000255" key="3"/>
<evidence type="ECO:0000255" key="4">
    <source>
        <dbReference type="PROSITE-ProRule" id="PRU00769"/>
    </source>
</evidence>
<feature type="signal peptide" evidence="1">
    <location>
        <begin position="1"/>
        <end position="18"/>
    </location>
</feature>
<feature type="chain" id="PRO_0000246080" description="Alpha-fetoprotein" evidence="1">
    <location>
        <begin position="19"/>
        <end position="610"/>
    </location>
</feature>
<feature type="domain" description="Albumin 1" evidence="4">
    <location>
        <begin position="19"/>
        <end position="210"/>
    </location>
</feature>
<feature type="domain" description="Albumin 2" evidence="4">
    <location>
        <begin position="211"/>
        <end position="403"/>
    </location>
</feature>
<feature type="domain" description="Albumin 3" evidence="4">
    <location>
        <begin position="404"/>
        <end position="602"/>
    </location>
</feature>
<feature type="binding site" evidence="1">
    <location>
        <position position="22"/>
    </location>
    <ligand>
        <name>Cu(2+)</name>
        <dbReference type="ChEBI" id="CHEBI:29036"/>
    </ligand>
</feature>
<feature type="modified residue" description="Phosphoserine" evidence="2">
    <location>
        <position position="111"/>
    </location>
</feature>
<feature type="modified residue" description="Phosphoserine" evidence="2">
    <location>
        <position position="115"/>
    </location>
</feature>
<feature type="modified residue" description="Phosphoserine" evidence="2">
    <location>
        <position position="345"/>
    </location>
</feature>
<feature type="modified residue" description="Phosphoserine" evidence="2">
    <location>
        <position position="445"/>
    </location>
</feature>
<feature type="glycosylation site" description="N-linked (GlcNAc...) asparagine" evidence="3">
    <location>
        <position position="197"/>
    </location>
</feature>
<feature type="glycosylation site" description="N-linked (GlcNAc...) asparagine" evidence="3">
    <location>
        <position position="251"/>
    </location>
</feature>
<feature type="disulfide bond" evidence="4">
    <location>
        <begin position="99"/>
        <end position="114"/>
    </location>
</feature>
<feature type="disulfide bond" evidence="4">
    <location>
        <begin position="113"/>
        <end position="124"/>
    </location>
</feature>
<feature type="disulfide bond" evidence="4">
    <location>
        <begin position="148"/>
        <end position="193"/>
    </location>
</feature>
<feature type="disulfide bond" evidence="4">
    <location>
        <begin position="192"/>
        <end position="201"/>
    </location>
</feature>
<feature type="disulfide bond" evidence="4">
    <location>
        <begin position="224"/>
        <end position="270"/>
    </location>
</feature>
<feature type="disulfide bond" evidence="4">
    <location>
        <begin position="269"/>
        <end position="277"/>
    </location>
</feature>
<feature type="disulfide bond" evidence="4">
    <location>
        <begin position="289"/>
        <end position="303"/>
    </location>
</feature>
<feature type="disulfide bond" evidence="4">
    <location>
        <begin position="302"/>
        <end position="314"/>
    </location>
</feature>
<feature type="disulfide bond" evidence="4">
    <location>
        <begin position="385"/>
        <end position="394"/>
    </location>
</feature>
<feature type="disulfide bond" evidence="4">
    <location>
        <begin position="417"/>
        <end position="463"/>
    </location>
</feature>
<feature type="disulfide bond" evidence="4">
    <location>
        <begin position="462"/>
        <end position="473"/>
    </location>
</feature>
<feature type="disulfide bond" evidence="4">
    <location>
        <begin position="486"/>
        <end position="502"/>
    </location>
</feature>
<feature type="disulfide bond" evidence="4">
    <location>
        <begin position="501"/>
        <end position="512"/>
    </location>
</feature>
<feature type="disulfide bond" evidence="4">
    <location>
        <begin position="539"/>
        <end position="584"/>
    </location>
</feature>
<feature type="disulfide bond" evidence="4">
    <location>
        <begin position="583"/>
        <end position="592"/>
    </location>
</feature>
<reference key="1">
    <citation type="submission" date="2005-08" db="EMBL/GenBank/DDBJ databases">
        <authorList>
            <consortium name="NIH - Mammalian Gene Collection (MGC) project"/>
        </authorList>
    </citation>
    <scope>NUCLEOTIDE SEQUENCE [LARGE SCALE MRNA]</scope>
    <source>
        <strain>Hereford</strain>
        <tissue>Fetal liver</tissue>
    </source>
</reference>
<name>FETA_BOVIN</name>
<dbReference type="EMBL" id="BC103123">
    <property type="protein sequence ID" value="AAI03124.1"/>
    <property type="molecule type" value="mRNA"/>
</dbReference>
<dbReference type="RefSeq" id="NP_001029434.1">
    <property type="nucleotide sequence ID" value="NM_001034262.2"/>
</dbReference>
<dbReference type="SMR" id="Q3SZ57"/>
<dbReference type="FunCoup" id="Q3SZ57">
    <property type="interactions" value="136"/>
</dbReference>
<dbReference type="STRING" id="9913.ENSBTAP00000022772"/>
<dbReference type="GlyCosmos" id="Q3SZ57">
    <property type="glycosylation" value="2 sites, No reported glycans"/>
</dbReference>
<dbReference type="GlyGen" id="Q3SZ57">
    <property type="glycosylation" value="2 sites"/>
</dbReference>
<dbReference type="PaxDb" id="9913-ENSBTAP00000022772"/>
<dbReference type="PeptideAtlas" id="Q3SZ57"/>
<dbReference type="Ensembl" id="ENSBTAT00000022772.4">
    <property type="protein sequence ID" value="ENSBTAP00000022772.3"/>
    <property type="gene ID" value="ENSBTAG00000017131.5"/>
</dbReference>
<dbReference type="GeneID" id="506011"/>
<dbReference type="KEGG" id="bta:506011"/>
<dbReference type="CTD" id="174"/>
<dbReference type="VEuPathDB" id="HostDB:ENSBTAG00000017131"/>
<dbReference type="VGNC" id="VGNC:25717">
    <property type="gene designation" value="AFP"/>
</dbReference>
<dbReference type="eggNOG" id="ENOG502R7EA">
    <property type="taxonomic scope" value="Eukaryota"/>
</dbReference>
<dbReference type="GeneTree" id="ENSGT00390000000113"/>
<dbReference type="HOGENOM" id="CLU_030161_1_0_1"/>
<dbReference type="InParanoid" id="Q3SZ57"/>
<dbReference type="OMA" id="HEECCRG"/>
<dbReference type="OrthoDB" id="9875082at2759"/>
<dbReference type="TreeFam" id="TF335561"/>
<dbReference type="Reactome" id="R-BTA-381426">
    <property type="pathway name" value="Regulation of Insulin-like Growth Factor (IGF) transport and uptake by Insulin-like Growth Factor Binding Proteins (IGFBPs)"/>
</dbReference>
<dbReference type="Reactome" id="R-BTA-8957275">
    <property type="pathway name" value="Post-translational protein phosphorylation"/>
</dbReference>
<dbReference type="Proteomes" id="UP000009136">
    <property type="component" value="Chromosome 6"/>
</dbReference>
<dbReference type="Bgee" id="ENSBTAG00000017131">
    <property type="expression patterns" value="Expressed in metanephros cortex and 10 other cell types or tissues"/>
</dbReference>
<dbReference type="GO" id="GO:0005737">
    <property type="term" value="C:cytoplasm"/>
    <property type="evidence" value="ECO:0000318"/>
    <property type="project" value="GO_Central"/>
</dbReference>
<dbReference type="GO" id="GO:0005615">
    <property type="term" value="C:extracellular space"/>
    <property type="evidence" value="ECO:0007669"/>
    <property type="project" value="Ensembl"/>
</dbReference>
<dbReference type="GO" id="GO:0046872">
    <property type="term" value="F:metal ion binding"/>
    <property type="evidence" value="ECO:0007669"/>
    <property type="project" value="UniProtKB-KW"/>
</dbReference>
<dbReference type="GO" id="GO:0006915">
    <property type="term" value="P:apoptotic process"/>
    <property type="evidence" value="ECO:0007669"/>
    <property type="project" value="Ensembl"/>
</dbReference>
<dbReference type="GO" id="GO:0048872">
    <property type="term" value="P:homeostasis of number of cells"/>
    <property type="evidence" value="ECO:0007669"/>
    <property type="project" value="Ensembl"/>
</dbReference>
<dbReference type="GO" id="GO:0006955">
    <property type="term" value="P:immune response"/>
    <property type="evidence" value="ECO:0007669"/>
    <property type="project" value="Ensembl"/>
</dbReference>
<dbReference type="GO" id="GO:0001542">
    <property type="term" value="P:ovulation from ovarian follicle"/>
    <property type="evidence" value="ECO:0007669"/>
    <property type="project" value="Ensembl"/>
</dbReference>
<dbReference type="GO" id="GO:0042448">
    <property type="term" value="P:progesterone metabolic process"/>
    <property type="evidence" value="ECO:0007669"/>
    <property type="project" value="Ensembl"/>
</dbReference>
<dbReference type="CDD" id="cd00015">
    <property type="entry name" value="ALBUMIN"/>
    <property type="match status" value="3"/>
</dbReference>
<dbReference type="FunFam" id="1.10.246.10:FF:000001">
    <property type="entry name" value="Serum albumin"/>
    <property type="match status" value="1"/>
</dbReference>
<dbReference type="FunFam" id="1.10.246.10:FF:000002">
    <property type="entry name" value="Serum albumin"/>
    <property type="match status" value="2"/>
</dbReference>
<dbReference type="FunFam" id="1.10.246.10:FF:000004">
    <property type="entry name" value="Serum albumin"/>
    <property type="match status" value="1"/>
</dbReference>
<dbReference type="Gene3D" id="1.10.246.10">
    <property type="match status" value="6"/>
</dbReference>
<dbReference type="InterPro" id="IPR000264">
    <property type="entry name" value="ALB/AFP/VDB"/>
</dbReference>
<dbReference type="InterPro" id="IPR020858">
    <property type="entry name" value="Serum_albumin-like"/>
</dbReference>
<dbReference type="InterPro" id="IPR021177">
    <property type="entry name" value="Serum_albumin/AFP/Afamin"/>
</dbReference>
<dbReference type="InterPro" id="IPR020857">
    <property type="entry name" value="Serum_albumin_CS"/>
</dbReference>
<dbReference type="InterPro" id="IPR014760">
    <property type="entry name" value="Serum_albumin_N"/>
</dbReference>
<dbReference type="PANTHER" id="PTHR11385:SF7">
    <property type="entry name" value="ALPHA-FETOPROTEIN"/>
    <property type="match status" value="1"/>
</dbReference>
<dbReference type="PANTHER" id="PTHR11385">
    <property type="entry name" value="SERUM ALBUMIN-RELATED"/>
    <property type="match status" value="1"/>
</dbReference>
<dbReference type="Pfam" id="PF00273">
    <property type="entry name" value="Serum_albumin"/>
    <property type="match status" value="3"/>
</dbReference>
<dbReference type="PIRSF" id="PIRSF002520">
    <property type="entry name" value="Serum_albumin_subgroup"/>
    <property type="match status" value="1"/>
</dbReference>
<dbReference type="PRINTS" id="PR00803">
    <property type="entry name" value="AFETOPROTEIN"/>
</dbReference>
<dbReference type="PRINTS" id="PR00802">
    <property type="entry name" value="SERUMALBUMIN"/>
</dbReference>
<dbReference type="SMART" id="SM00103">
    <property type="entry name" value="ALBUMIN"/>
    <property type="match status" value="3"/>
</dbReference>
<dbReference type="SUPFAM" id="SSF48552">
    <property type="entry name" value="Serum albumin-like"/>
    <property type="match status" value="3"/>
</dbReference>
<dbReference type="PROSITE" id="PS00212">
    <property type="entry name" value="ALBUMIN_1"/>
    <property type="match status" value="2"/>
</dbReference>
<dbReference type="PROSITE" id="PS51438">
    <property type="entry name" value="ALBUMIN_2"/>
    <property type="match status" value="3"/>
</dbReference>
<gene>
    <name type="primary">AFP</name>
</gene>
<protein>
    <recommendedName>
        <fullName>Alpha-fetoprotein</fullName>
    </recommendedName>
    <alternativeName>
        <fullName>Alpha-1-fetoprotein</fullName>
    </alternativeName>
    <alternativeName>
        <fullName>Alpha-fetoglobulin</fullName>
    </alternativeName>
</protein>
<accession>Q3SZ57</accession>